<feature type="chain" id="PRO_1000073454" description="Large ribosomal subunit protein uL30">
    <location>
        <begin position="1"/>
        <end position="59"/>
    </location>
</feature>
<reference key="1">
    <citation type="journal article" date="2008" name="J. Bacteriol.">
        <title>Genome sequence of Staphylococcus aureus strain Newman and comparative analysis of staphylococcal genomes: polymorphism and evolution of two major pathogenicity islands.</title>
        <authorList>
            <person name="Baba T."/>
            <person name="Bae T."/>
            <person name="Schneewind O."/>
            <person name="Takeuchi F."/>
            <person name="Hiramatsu K."/>
        </authorList>
    </citation>
    <scope>NUCLEOTIDE SEQUENCE [LARGE SCALE GENOMIC DNA]</scope>
    <source>
        <strain>Newman</strain>
    </source>
</reference>
<accession>A6QJ74</accession>
<sequence length="59" mass="6554">MAKLQITLTRSVIGRPETQRKTVEALGLKKTNSSVVVEDNPAIRGQINKVKHLVTVEEK</sequence>
<proteinExistence type="inferred from homology"/>
<gene>
    <name evidence="1" type="primary">rpmD</name>
    <name type="ordered locus">NWMN_2134</name>
</gene>
<keyword id="KW-0687">Ribonucleoprotein</keyword>
<keyword id="KW-0689">Ribosomal protein</keyword>
<evidence type="ECO:0000255" key="1">
    <source>
        <dbReference type="HAMAP-Rule" id="MF_01371"/>
    </source>
</evidence>
<evidence type="ECO:0000305" key="2"/>
<name>RL30_STAAE</name>
<organism>
    <name type="scientific">Staphylococcus aureus (strain Newman)</name>
    <dbReference type="NCBI Taxonomy" id="426430"/>
    <lineage>
        <taxon>Bacteria</taxon>
        <taxon>Bacillati</taxon>
        <taxon>Bacillota</taxon>
        <taxon>Bacilli</taxon>
        <taxon>Bacillales</taxon>
        <taxon>Staphylococcaceae</taxon>
        <taxon>Staphylococcus</taxon>
    </lineage>
</organism>
<protein>
    <recommendedName>
        <fullName evidence="1">Large ribosomal subunit protein uL30</fullName>
    </recommendedName>
    <alternativeName>
        <fullName evidence="2">50S ribosomal protein L30</fullName>
    </alternativeName>
</protein>
<dbReference type="EMBL" id="AP009351">
    <property type="protein sequence ID" value="BAF68406.1"/>
    <property type="molecule type" value="Genomic_DNA"/>
</dbReference>
<dbReference type="RefSeq" id="WP_001096577.1">
    <property type="nucleotide sequence ID" value="NZ_JBBIAE010000006.1"/>
</dbReference>
<dbReference type="SMR" id="A6QJ74"/>
<dbReference type="KEGG" id="sae:NWMN_2134"/>
<dbReference type="HOGENOM" id="CLU_131047_2_1_9"/>
<dbReference type="Proteomes" id="UP000006386">
    <property type="component" value="Chromosome"/>
</dbReference>
<dbReference type="GO" id="GO:0022625">
    <property type="term" value="C:cytosolic large ribosomal subunit"/>
    <property type="evidence" value="ECO:0007669"/>
    <property type="project" value="TreeGrafter"/>
</dbReference>
<dbReference type="GO" id="GO:0003735">
    <property type="term" value="F:structural constituent of ribosome"/>
    <property type="evidence" value="ECO:0007669"/>
    <property type="project" value="InterPro"/>
</dbReference>
<dbReference type="GO" id="GO:0006412">
    <property type="term" value="P:translation"/>
    <property type="evidence" value="ECO:0007669"/>
    <property type="project" value="UniProtKB-UniRule"/>
</dbReference>
<dbReference type="CDD" id="cd01658">
    <property type="entry name" value="Ribosomal_L30"/>
    <property type="match status" value="1"/>
</dbReference>
<dbReference type="FunFam" id="3.30.1390.20:FF:000001">
    <property type="entry name" value="50S ribosomal protein L30"/>
    <property type="match status" value="1"/>
</dbReference>
<dbReference type="Gene3D" id="3.30.1390.20">
    <property type="entry name" value="Ribosomal protein L30, ferredoxin-like fold domain"/>
    <property type="match status" value="1"/>
</dbReference>
<dbReference type="HAMAP" id="MF_01371_B">
    <property type="entry name" value="Ribosomal_uL30_B"/>
    <property type="match status" value="1"/>
</dbReference>
<dbReference type="InterPro" id="IPR036919">
    <property type="entry name" value="Ribo_uL30_ferredoxin-like_sf"/>
</dbReference>
<dbReference type="InterPro" id="IPR005996">
    <property type="entry name" value="Ribosomal_uL30_bac-type"/>
</dbReference>
<dbReference type="InterPro" id="IPR016082">
    <property type="entry name" value="Ribosomal_uL30_ferredoxin-like"/>
</dbReference>
<dbReference type="NCBIfam" id="TIGR01308">
    <property type="entry name" value="rpmD_bact"/>
    <property type="match status" value="1"/>
</dbReference>
<dbReference type="PANTHER" id="PTHR15892:SF2">
    <property type="entry name" value="LARGE RIBOSOMAL SUBUNIT PROTEIN UL30M"/>
    <property type="match status" value="1"/>
</dbReference>
<dbReference type="PANTHER" id="PTHR15892">
    <property type="entry name" value="MITOCHONDRIAL RIBOSOMAL PROTEIN L30"/>
    <property type="match status" value="1"/>
</dbReference>
<dbReference type="Pfam" id="PF00327">
    <property type="entry name" value="Ribosomal_L30"/>
    <property type="match status" value="1"/>
</dbReference>
<dbReference type="PIRSF" id="PIRSF002211">
    <property type="entry name" value="Ribosomal_L30_bac-type"/>
    <property type="match status" value="1"/>
</dbReference>
<dbReference type="SUPFAM" id="SSF55129">
    <property type="entry name" value="Ribosomal protein L30p/L7e"/>
    <property type="match status" value="1"/>
</dbReference>
<comment type="subunit">
    <text evidence="1">Part of the 50S ribosomal subunit.</text>
</comment>
<comment type="similarity">
    <text evidence="1">Belongs to the universal ribosomal protein uL30 family.</text>
</comment>